<keyword id="KW-0648">Protein biosynthesis</keyword>
<keyword id="KW-1185">Reference proteome</keyword>
<keyword id="KW-0808">Transferase</keyword>
<organism>
    <name type="scientific">Geobacter sulfurreducens (strain ATCC 51573 / DSM 12127 / PCA)</name>
    <dbReference type="NCBI Taxonomy" id="243231"/>
    <lineage>
        <taxon>Bacteria</taxon>
        <taxon>Pseudomonadati</taxon>
        <taxon>Thermodesulfobacteriota</taxon>
        <taxon>Desulfuromonadia</taxon>
        <taxon>Geobacterales</taxon>
        <taxon>Geobacteraceae</taxon>
        <taxon>Geobacter</taxon>
    </lineage>
</organism>
<dbReference type="EC" id="2.1.2.9" evidence="1"/>
<dbReference type="EMBL" id="AE017180">
    <property type="protein sequence ID" value="AAR33465.1"/>
    <property type="molecule type" value="Genomic_DNA"/>
</dbReference>
<dbReference type="RefSeq" id="NP_951192.1">
    <property type="nucleotide sequence ID" value="NC_002939.5"/>
</dbReference>
<dbReference type="RefSeq" id="WP_010940806.1">
    <property type="nucleotide sequence ID" value="NC_002939.5"/>
</dbReference>
<dbReference type="SMR" id="Q74GW4"/>
<dbReference type="FunCoup" id="Q74GW4">
    <property type="interactions" value="504"/>
</dbReference>
<dbReference type="STRING" id="243231.GSU0130"/>
<dbReference type="EnsemblBacteria" id="AAR33465">
    <property type="protein sequence ID" value="AAR33465"/>
    <property type="gene ID" value="GSU0130"/>
</dbReference>
<dbReference type="KEGG" id="gsu:GSU0130"/>
<dbReference type="PATRIC" id="fig|243231.5.peg.131"/>
<dbReference type="eggNOG" id="COG0223">
    <property type="taxonomic scope" value="Bacteria"/>
</dbReference>
<dbReference type="HOGENOM" id="CLU_033347_1_1_7"/>
<dbReference type="InParanoid" id="Q74GW4"/>
<dbReference type="OrthoDB" id="9802815at2"/>
<dbReference type="Proteomes" id="UP000000577">
    <property type="component" value="Chromosome"/>
</dbReference>
<dbReference type="GO" id="GO:0005829">
    <property type="term" value="C:cytosol"/>
    <property type="evidence" value="ECO:0000318"/>
    <property type="project" value="GO_Central"/>
</dbReference>
<dbReference type="GO" id="GO:0004479">
    <property type="term" value="F:methionyl-tRNA formyltransferase activity"/>
    <property type="evidence" value="ECO:0000318"/>
    <property type="project" value="GO_Central"/>
</dbReference>
<dbReference type="GO" id="GO:0071951">
    <property type="term" value="P:conversion of methionyl-tRNA to N-formyl-methionyl-tRNA"/>
    <property type="evidence" value="ECO:0000318"/>
    <property type="project" value="GO_Central"/>
</dbReference>
<dbReference type="CDD" id="cd08646">
    <property type="entry name" value="FMT_core_Met-tRNA-FMT_N"/>
    <property type="match status" value="1"/>
</dbReference>
<dbReference type="CDD" id="cd08704">
    <property type="entry name" value="Met_tRNA_FMT_C"/>
    <property type="match status" value="1"/>
</dbReference>
<dbReference type="FunFam" id="3.40.50.12230:FF:000001">
    <property type="entry name" value="Methionyl-tRNA formyltransferase"/>
    <property type="match status" value="1"/>
</dbReference>
<dbReference type="Gene3D" id="3.10.25.10">
    <property type="entry name" value="Formyl transferase, C-terminal domain"/>
    <property type="match status" value="1"/>
</dbReference>
<dbReference type="Gene3D" id="3.40.50.170">
    <property type="entry name" value="Formyl transferase, N-terminal domain"/>
    <property type="match status" value="1"/>
</dbReference>
<dbReference type="HAMAP" id="MF_00182">
    <property type="entry name" value="Formyl_trans"/>
    <property type="match status" value="1"/>
</dbReference>
<dbReference type="InterPro" id="IPR005794">
    <property type="entry name" value="Fmt"/>
</dbReference>
<dbReference type="InterPro" id="IPR005793">
    <property type="entry name" value="Formyl_trans_C"/>
</dbReference>
<dbReference type="InterPro" id="IPR037022">
    <property type="entry name" value="Formyl_trans_C_sf"/>
</dbReference>
<dbReference type="InterPro" id="IPR002376">
    <property type="entry name" value="Formyl_transf_N"/>
</dbReference>
<dbReference type="InterPro" id="IPR036477">
    <property type="entry name" value="Formyl_transf_N_sf"/>
</dbReference>
<dbReference type="InterPro" id="IPR011034">
    <property type="entry name" value="Formyl_transferase-like_C_sf"/>
</dbReference>
<dbReference type="InterPro" id="IPR044135">
    <property type="entry name" value="Met-tRNA-FMT_C"/>
</dbReference>
<dbReference type="InterPro" id="IPR041711">
    <property type="entry name" value="Met-tRNA-FMT_N"/>
</dbReference>
<dbReference type="NCBIfam" id="TIGR00460">
    <property type="entry name" value="fmt"/>
    <property type="match status" value="1"/>
</dbReference>
<dbReference type="PANTHER" id="PTHR11138">
    <property type="entry name" value="METHIONYL-TRNA FORMYLTRANSFERASE"/>
    <property type="match status" value="1"/>
</dbReference>
<dbReference type="PANTHER" id="PTHR11138:SF5">
    <property type="entry name" value="METHIONYL-TRNA FORMYLTRANSFERASE, MITOCHONDRIAL"/>
    <property type="match status" value="1"/>
</dbReference>
<dbReference type="Pfam" id="PF02911">
    <property type="entry name" value="Formyl_trans_C"/>
    <property type="match status" value="1"/>
</dbReference>
<dbReference type="Pfam" id="PF00551">
    <property type="entry name" value="Formyl_trans_N"/>
    <property type="match status" value="1"/>
</dbReference>
<dbReference type="SUPFAM" id="SSF50486">
    <property type="entry name" value="FMT C-terminal domain-like"/>
    <property type="match status" value="1"/>
</dbReference>
<dbReference type="SUPFAM" id="SSF53328">
    <property type="entry name" value="Formyltransferase"/>
    <property type="match status" value="1"/>
</dbReference>
<evidence type="ECO:0000255" key="1">
    <source>
        <dbReference type="HAMAP-Rule" id="MF_00182"/>
    </source>
</evidence>
<name>FMT_GEOSL</name>
<proteinExistence type="inferred from homology"/>
<feature type="chain" id="PRO_0000082969" description="Methionyl-tRNA formyltransferase">
    <location>
        <begin position="1"/>
        <end position="317"/>
    </location>
</feature>
<feature type="binding site" evidence="1">
    <location>
        <begin position="112"/>
        <end position="115"/>
    </location>
    <ligand>
        <name>(6S)-5,6,7,8-tetrahydrofolate</name>
        <dbReference type="ChEBI" id="CHEBI:57453"/>
    </ligand>
</feature>
<sequence length="317" mass="34668">MAGLRIIFMGTPEFACPTLRKLIERGEEVIAVVTQPDRPKGRGQKLVPPPVKALAQEHDIPVLQPLKVRTPESVDEIRRLAPDLIVVVAFGQILPQSLLDIPKHGCINIHASLLPRYRGAAPLNWCLINGETETGITTMMMDAGLDTGDMLVKRAIPIGPDEDAQSLHDRLSQLGAETIDETLDLLLAGKLVREKQDDSLTCYAPMLKKEDGLVDWTREPVQVKNQVRGFTPWPGAYTFLDGKTLKLYRVAVAGETGEPGEILRVGREGILVGCGSGSILIQELQLEGRKRLPTAEFLAGFRLEPGTRLGEAGSVEH</sequence>
<accession>Q74GW4</accession>
<protein>
    <recommendedName>
        <fullName evidence="1">Methionyl-tRNA formyltransferase</fullName>
        <ecNumber evidence="1">2.1.2.9</ecNumber>
    </recommendedName>
</protein>
<gene>
    <name evidence="1" type="primary">fmt</name>
    <name type="ordered locus">GSU0130</name>
</gene>
<comment type="function">
    <text evidence="1">Attaches a formyl group to the free amino group of methionyl-tRNA(fMet). The formyl group appears to play a dual role in the initiator identity of N-formylmethionyl-tRNA by promoting its recognition by IF2 and preventing the misappropriation of this tRNA by the elongation apparatus.</text>
</comment>
<comment type="catalytic activity">
    <reaction evidence="1">
        <text>L-methionyl-tRNA(fMet) + (6R)-10-formyltetrahydrofolate = N-formyl-L-methionyl-tRNA(fMet) + (6S)-5,6,7,8-tetrahydrofolate + H(+)</text>
        <dbReference type="Rhea" id="RHEA:24380"/>
        <dbReference type="Rhea" id="RHEA-COMP:9952"/>
        <dbReference type="Rhea" id="RHEA-COMP:9953"/>
        <dbReference type="ChEBI" id="CHEBI:15378"/>
        <dbReference type="ChEBI" id="CHEBI:57453"/>
        <dbReference type="ChEBI" id="CHEBI:78530"/>
        <dbReference type="ChEBI" id="CHEBI:78844"/>
        <dbReference type="ChEBI" id="CHEBI:195366"/>
        <dbReference type="EC" id="2.1.2.9"/>
    </reaction>
</comment>
<comment type="similarity">
    <text evidence="1">Belongs to the Fmt family.</text>
</comment>
<reference key="1">
    <citation type="journal article" date="2003" name="Science">
        <title>Genome of Geobacter sulfurreducens: metal reduction in subsurface environments.</title>
        <authorList>
            <person name="Methe B.A."/>
            <person name="Nelson K.E."/>
            <person name="Eisen J.A."/>
            <person name="Paulsen I.T."/>
            <person name="Nelson W.C."/>
            <person name="Heidelberg J.F."/>
            <person name="Wu D."/>
            <person name="Wu M."/>
            <person name="Ward N.L."/>
            <person name="Beanan M.J."/>
            <person name="Dodson R.J."/>
            <person name="Madupu R."/>
            <person name="Brinkac L.M."/>
            <person name="Daugherty S.C."/>
            <person name="DeBoy R.T."/>
            <person name="Durkin A.S."/>
            <person name="Gwinn M.L."/>
            <person name="Kolonay J.F."/>
            <person name="Sullivan S.A."/>
            <person name="Haft D.H."/>
            <person name="Selengut J."/>
            <person name="Davidsen T.M."/>
            <person name="Zafar N."/>
            <person name="White O."/>
            <person name="Tran B."/>
            <person name="Romero C."/>
            <person name="Forberger H.A."/>
            <person name="Weidman J.F."/>
            <person name="Khouri H.M."/>
            <person name="Feldblyum T.V."/>
            <person name="Utterback T.R."/>
            <person name="Van Aken S.E."/>
            <person name="Lovley D.R."/>
            <person name="Fraser C.M."/>
        </authorList>
    </citation>
    <scope>NUCLEOTIDE SEQUENCE [LARGE SCALE GENOMIC DNA]</scope>
    <source>
        <strain>ATCC 51573 / DSM 12127 / PCA</strain>
    </source>
</reference>